<gene>
    <name evidence="8" type="primary">RPS9B</name>
    <name type="synonym">RPS13B</name>
    <name type="synonym">SUP46</name>
    <name type="ordered locus">YBR189W</name>
    <name type="ORF">YBR1317</name>
</gene>
<keyword id="KW-0002">3D-structure</keyword>
<keyword id="KW-0963">Cytoplasm</keyword>
<keyword id="KW-0903">Direct protein sequencing</keyword>
<keyword id="KW-1017">Isopeptide bond</keyword>
<keyword id="KW-0539">Nucleus</keyword>
<keyword id="KW-0597">Phosphoprotein</keyword>
<keyword id="KW-1185">Reference proteome</keyword>
<keyword id="KW-0687">Ribonucleoprotein</keyword>
<keyword id="KW-0689">Ribosomal protein</keyword>
<keyword id="KW-0690">Ribosome biogenesis</keyword>
<keyword id="KW-0694">RNA-binding</keyword>
<keyword id="KW-0698">rRNA processing</keyword>
<keyword id="KW-0699">rRNA-binding</keyword>
<keyword id="KW-0832">Ubl conjugation</keyword>
<proteinExistence type="evidence at protein level"/>
<sequence>MPRAPRTYSKTYSTPKRPYESSRLDAELKLAGEFGLKNKREIYRISFQLSKIRRAARDLLTRDEKDPKRLFEGNALIRRLVRVGVLSEDKKKLDYVLALKVEDFLERRLQTQVYKLGLAKSVHHARVLITQRHIAVGKQIVNIPSFMVRLDSEKHIDFAPTSPFGGARPGRVARRNAARKAEASGEAAEEAEDEE</sequence>
<comment type="function">
    <text evidence="4 10">Component of the ribosome, a large ribonucleoprotein complex responsible for the synthesis of proteins in the cell. The small ribosomal subunit (SSU) binds messenger RNAs (mRNAs) and translates the encoded message by selecting cognate aminoacyl-transfer RNA (tRNA) molecules. The large subunit (LSU) contains the ribosomal catalytic site termed the peptidyl transferase center (PTC), which catalyzes the formation of peptide bonds, thereby polymerizing the amino acids delivered by tRNAs into a polypeptide chain. The nascent polypeptides leave the ribosome through a tunnel in the LSU and interact with protein factors that function in enzymatic processing, targeting, and the membrane insertion of nascent chains at the exit of the ribosomal tunnel (PubMed:22096102). uS4 is involved in nucleolar processing of pre-18S ribosomal RNA and ribosome assembly (PubMed:15590835).</text>
</comment>
<comment type="subunit">
    <text evidence="4 5 11">Component of the small ribosomal subunit (SSU). Mature yeast ribosomes consist of a small (40S) and a large (60S) subunit. The 40S small subunit contains 1 molecule of ribosomal RNA (18S rRNA) and 33 different proteins (encoded by 57 genes). The large 60S subunit contains 3 rRNA molecules (25S, 5.8S and 5S rRNA) and 46 different proteins (encoded by 81 genes) (PubMed:22096102, PubMed:9559554). Interacts with snoRNA U3. uS11 interacts with MPP10. Component of the ribosomal small subunit (SSU) processome composed of at least 40 protein subunits and snoRNA U3 (PubMed:15590835).</text>
</comment>
<comment type="interaction">
    <interactant intactId="EBI-16181">
        <id>P05755</id>
    </interactant>
    <interactant intactId="EBI-16176">
        <id>O13516</id>
        <label>RPS9A</label>
    </interactant>
    <organismsDiffer>false</organismsDiffer>
    <experiments>3</experiments>
</comment>
<comment type="subcellular location">
    <subcellularLocation>
        <location evidence="5">Cytoplasm</location>
    </subcellularLocation>
    <subcellularLocation>
        <location evidence="4">Nucleus</location>
        <location evidence="4">Nucleolus</location>
    </subcellularLocation>
</comment>
<comment type="miscellaneous">
    <text evidence="3">Present with 63300 molecules/cell in log phase SD medium.</text>
</comment>
<comment type="miscellaneous">
    <text evidence="9">There are 2 genes for uS4 in yeast.</text>
</comment>
<comment type="similarity">
    <text evidence="9">Belongs to the universal ribosomal protein uS4 family.</text>
</comment>
<accession>P05755</accession>
<accession>D6VQI4</accession>
<dbReference type="EMBL" id="M88650">
    <property type="protein sequence ID" value="AAB59327.1"/>
    <property type="molecule type" value="Genomic_DNA"/>
</dbReference>
<dbReference type="EMBL" id="U02073">
    <property type="protein sequence ID" value="AAB60283.1"/>
    <property type="molecule type" value="Genomic_DNA"/>
</dbReference>
<dbReference type="EMBL" id="Z36058">
    <property type="protein sequence ID" value="CAA85151.1"/>
    <property type="molecule type" value="Genomic_DNA"/>
</dbReference>
<dbReference type="EMBL" id="BK006936">
    <property type="protein sequence ID" value="DAA07304.1"/>
    <property type="molecule type" value="Genomic_DNA"/>
</dbReference>
<dbReference type="PIR" id="S31287">
    <property type="entry name" value="S31287"/>
</dbReference>
<dbReference type="RefSeq" id="NP_009748.3">
    <property type="nucleotide sequence ID" value="NM_001178537.3"/>
</dbReference>
<dbReference type="PDB" id="6WOO">
    <property type="method" value="EM"/>
    <property type="resolution" value="2.90 A"/>
    <property type="chains" value="JJ=2-183"/>
</dbReference>
<dbReference type="PDBsum" id="6WOO"/>
<dbReference type="EMDB" id="EMD-21859"/>
<dbReference type="SMR" id="P05755"/>
<dbReference type="BioGRID" id="32887">
    <property type="interactions" value="242"/>
</dbReference>
<dbReference type="ComplexPortal" id="CPX-1599">
    <property type="entry name" value="40S cytosolic small ribosomal subunit"/>
</dbReference>
<dbReference type="FunCoup" id="P05755">
    <property type="interactions" value="1196"/>
</dbReference>
<dbReference type="IntAct" id="P05755">
    <property type="interactions" value="114"/>
</dbReference>
<dbReference type="MINT" id="P05755"/>
<dbReference type="STRING" id="4932.YBR189W"/>
<dbReference type="iPTMnet" id="P05755"/>
<dbReference type="PaxDb" id="4932-YBR189W"/>
<dbReference type="PeptideAtlas" id="P05755"/>
<dbReference type="TopDownProteomics" id="P05755"/>
<dbReference type="EnsemblFungi" id="YBR189W_mRNA">
    <property type="protein sequence ID" value="YBR189W"/>
    <property type="gene ID" value="YBR189W"/>
</dbReference>
<dbReference type="GeneID" id="852487"/>
<dbReference type="KEGG" id="sce:YBR189W"/>
<dbReference type="AGR" id="SGD:S000000393"/>
<dbReference type="SGD" id="S000000393">
    <property type="gene designation" value="RPS9B"/>
</dbReference>
<dbReference type="VEuPathDB" id="FungiDB:YBR189W"/>
<dbReference type="eggNOG" id="KOG3301">
    <property type="taxonomic scope" value="Eukaryota"/>
</dbReference>
<dbReference type="GeneTree" id="ENSGT00550000074829"/>
<dbReference type="HOGENOM" id="CLU_089738_0_0_1"/>
<dbReference type="InParanoid" id="P05755"/>
<dbReference type="OMA" id="HIRIRFR"/>
<dbReference type="OrthoDB" id="1697570at2759"/>
<dbReference type="BioCyc" id="YEAST:G3O-29132-MONOMER"/>
<dbReference type="Reactome" id="R-SCE-156827">
    <property type="pathway name" value="L13a-mediated translational silencing of Ceruloplasmin expression"/>
</dbReference>
<dbReference type="Reactome" id="R-SCE-1799339">
    <property type="pathway name" value="SRP-dependent cotranslational protein targeting to membrane"/>
</dbReference>
<dbReference type="Reactome" id="R-SCE-6791226">
    <property type="pathway name" value="Major pathway of rRNA processing in the nucleolus and cytosol"/>
</dbReference>
<dbReference type="Reactome" id="R-SCE-72649">
    <property type="pathway name" value="Translation initiation complex formation"/>
</dbReference>
<dbReference type="Reactome" id="R-SCE-72689">
    <property type="pathway name" value="Formation of a pool of free 40S subunits"/>
</dbReference>
<dbReference type="Reactome" id="R-SCE-72695">
    <property type="pathway name" value="Formation of the ternary complex, and subsequently, the 43S complex"/>
</dbReference>
<dbReference type="Reactome" id="R-SCE-72702">
    <property type="pathway name" value="Ribosomal scanning and start codon recognition"/>
</dbReference>
<dbReference type="Reactome" id="R-SCE-72706">
    <property type="pathway name" value="GTP hydrolysis and joining of the 60S ribosomal subunit"/>
</dbReference>
<dbReference type="Reactome" id="R-SCE-975956">
    <property type="pathway name" value="Nonsense Mediated Decay (NMD) independent of the Exon Junction Complex (EJC)"/>
</dbReference>
<dbReference type="Reactome" id="R-SCE-975957">
    <property type="pathway name" value="Nonsense Mediated Decay (NMD) enhanced by the Exon Junction Complex (EJC)"/>
</dbReference>
<dbReference type="BioGRID-ORCS" id="852487">
    <property type="hits" value="5 hits in 10 CRISPR screens"/>
</dbReference>
<dbReference type="PRO" id="PR:P05755"/>
<dbReference type="Proteomes" id="UP000002311">
    <property type="component" value="Chromosome II"/>
</dbReference>
<dbReference type="RNAct" id="P05755">
    <property type="molecule type" value="protein"/>
</dbReference>
<dbReference type="GO" id="GO:0030686">
    <property type="term" value="C:90S preribosome"/>
    <property type="evidence" value="ECO:0007005"/>
    <property type="project" value="SGD"/>
</dbReference>
<dbReference type="GO" id="GO:0005829">
    <property type="term" value="C:cytosol"/>
    <property type="evidence" value="ECO:0000304"/>
    <property type="project" value="Reactome"/>
</dbReference>
<dbReference type="GO" id="GO:0022627">
    <property type="term" value="C:cytosolic small ribosomal subunit"/>
    <property type="evidence" value="ECO:0000314"/>
    <property type="project" value="SGD"/>
</dbReference>
<dbReference type="GO" id="GO:0005730">
    <property type="term" value="C:nucleolus"/>
    <property type="evidence" value="ECO:0007669"/>
    <property type="project" value="UniProtKB-SubCell"/>
</dbReference>
<dbReference type="GO" id="GO:0032040">
    <property type="term" value="C:small-subunit processome"/>
    <property type="evidence" value="ECO:0000314"/>
    <property type="project" value="SGD"/>
</dbReference>
<dbReference type="GO" id="GO:0019843">
    <property type="term" value="F:rRNA binding"/>
    <property type="evidence" value="ECO:0000318"/>
    <property type="project" value="GO_Central"/>
</dbReference>
<dbReference type="GO" id="GO:0003735">
    <property type="term" value="F:structural constituent of ribosome"/>
    <property type="evidence" value="ECO:0000314"/>
    <property type="project" value="SGD"/>
</dbReference>
<dbReference type="GO" id="GO:0000462">
    <property type="term" value="P:maturation of SSU-rRNA from tricistronic rRNA transcript (SSU-rRNA, 5.8S rRNA, LSU-rRNA)"/>
    <property type="evidence" value="ECO:0000316"/>
    <property type="project" value="SGD"/>
</dbReference>
<dbReference type="GO" id="GO:0045903">
    <property type="term" value="P:positive regulation of translational fidelity"/>
    <property type="evidence" value="ECO:0000315"/>
    <property type="project" value="SGD"/>
</dbReference>
<dbReference type="GO" id="GO:0042274">
    <property type="term" value="P:ribosomal small subunit biogenesis"/>
    <property type="evidence" value="ECO:0000318"/>
    <property type="project" value="GO_Central"/>
</dbReference>
<dbReference type="GO" id="GO:0006412">
    <property type="term" value="P:translation"/>
    <property type="evidence" value="ECO:0007669"/>
    <property type="project" value="InterPro"/>
</dbReference>
<dbReference type="CDD" id="cd00165">
    <property type="entry name" value="S4"/>
    <property type="match status" value="1"/>
</dbReference>
<dbReference type="FunFam" id="3.10.290.10:FF:000021">
    <property type="entry name" value="40S ribosomal protein S9"/>
    <property type="match status" value="1"/>
</dbReference>
<dbReference type="Gene3D" id="3.10.290.10">
    <property type="entry name" value="RNA-binding S4 domain"/>
    <property type="match status" value="1"/>
</dbReference>
<dbReference type="InterPro" id="IPR022801">
    <property type="entry name" value="Ribosomal_uS4"/>
</dbReference>
<dbReference type="InterPro" id="IPR018079">
    <property type="entry name" value="Ribosomal_uS4_CS"/>
</dbReference>
<dbReference type="InterPro" id="IPR005710">
    <property type="entry name" value="Ribosomal_uS4_euk/arc"/>
</dbReference>
<dbReference type="InterPro" id="IPR001912">
    <property type="entry name" value="Ribosomal_uS4_N"/>
</dbReference>
<dbReference type="InterPro" id="IPR002942">
    <property type="entry name" value="S4_RNA-bd"/>
</dbReference>
<dbReference type="InterPro" id="IPR036986">
    <property type="entry name" value="S4_RNA-bd_sf"/>
</dbReference>
<dbReference type="NCBIfam" id="NF003139">
    <property type="entry name" value="PRK04051.1"/>
    <property type="match status" value="1"/>
</dbReference>
<dbReference type="NCBIfam" id="TIGR01018">
    <property type="entry name" value="uS4_arch"/>
    <property type="match status" value="1"/>
</dbReference>
<dbReference type="PANTHER" id="PTHR11831">
    <property type="entry name" value="30S 40S RIBOSOMAL PROTEIN"/>
    <property type="match status" value="1"/>
</dbReference>
<dbReference type="PANTHER" id="PTHR11831:SF5">
    <property type="entry name" value="40S RIBOSOMAL PROTEIN S9"/>
    <property type="match status" value="1"/>
</dbReference>
<dbReference type="Pfam" id="PF00163">
    <property type="entry name" value="Ribosomal_S4"/>
    <property type="match status" value="1"/>
</dbReference>
<dbReference type="Pfam" id="PF01479">
    <property type="entry name" value="S4"/>
    <property type="match status" value="1"/>
</dbReference>
<dbReference type="SMART" id="SM01390">
    <property type="entry name" value="Ribosomal_S4"/>
    <property type="match status" value="1"/>
</dbReference>
<dbReference type="SMART" id="SM00363">
    <property type="entry name" value="S4"/>
    <property type="match status" value="1"/>
</dbReference>
<dbReference type="SUPFAM" id="SSF55174">
    <property type="entry name" value="Alpha-L RNA-binding motif"/>
    <property type="match status" value="1"/>
</dbReference>
<dbReference type="PROSITE" id="PS00632">
    <property type="entry name" value="RIBOSOMAL_S4"/>
    <property type="match status" value="1"/>
</dbReference>
<dbReference type="PROSITE" id="PS50889">
    <property type="entry name" value="S4"/>
    <property type="match status" value="1"/>
</dbReference>
<organism>
    <name type="scientific">Saccharomyces cerevisiae (strain ATCC 204508 / S288c)</name>
    <name type="common">Baker's yeast</name>
    <dbReference type="NCBI Taxonomy" id="559292"/>
    <lineage>
        <taxon>Eukaryota</taxon>
        <taxon>Fungi</taxon>
        <taxon>Dikarya</taxon>
        <taxon>Ascomycota</taxon>
        <taxon>Saccharomycotina</taxon>
        <taxon>Saccharomycetes</taxon>
        <taxon>Saccharomycetales</taxon>
        <taxon>Saccharomycetaceae</taxon>
        <taxon>Saccharomyces</taxon>
    </lineage>
</organism>
<feature type="initiator methionine" description="Removed" evidence="6">
    <location>
        <position position="1"/>
    </location>
</feature>
<feature type="chain" id="PRO_0000132704" description="Small ribosomal subunit protein uS4B">
    <location>
        <begin position="2"/>
        <end position="195"/>
    </location>
</feature>
<feature type="domain" description="S4 RNA-binding" evidence="1">
    <location>
        <begin position="107"/>
        <end position="181"/>
    </location>
</feature>
<feature type="region of interest" description="Disordered" evidence="2">
    <location>
        <begin position="161"/>
        <end position="195"/>
    </location>
</feature>
<feature type="modified residue" description="Phosphoserine" evidence="12 13 14">
    <location>
        <position position="184"/>
    </location>
</feature>
<feature type="cross-link" description="Glycyl lysine isopeptide (Lys-Gly) (interchain with G-Cter in ubiquitin)" evidence="15">
    <location>
        <position position="180"/>
    </location>
</feature>
<feature type="sequence conflict" description="In Ref. 5; AA sequence." evidence="9" ref="5">
    <original>ESS</original>
    <variation>QSB</variation>
    <location>
        <begin position="20"/>
        <end position="22"/>
    </location>
</feature>
<name>RS9B_YEAST</name>
<protein>
    <recommendedName>
        <fullName evidence="7">Small ribosomal subunit protein uS4B</fullName>
    </recommendedName>
    <alternativeName>
        <fullName evidence="8">40S ribosomal protein S9-B</fullName>
    </alternativeName>
    <alternativeName>
        <fullName>RP21</fullName>
    </alternativeName>
    <alternativeName>
        <fullName>S13</fullName>
    </alternativeName>
    <alternativeName>
        <fullName>YP28</fullName>
    </alternativeName>
    <alternativeName>
        <fullName>YS11</fullName>
    </alternativeName>
</protein>
<reference key="1">
    <citation type="journal article" date="1992" name="Genetics">
        <title>The yeast omnipotent suppressor SUP46 encodes a ribosomal protein which is a functional and structural homolog of the Escherichia coli S4 ram protein.</title>
        <authorList>
            <person name="Vincent A."/>
            <person name="Liebman S.W."/>
        </authorList>
    </citation>
    <scope>NUCLEOTIDE SEQUENCE [GENOMIC DNA]</scope>
</reference>
<reference key="2">
    <citation type="journal article" date="1994" name="Yeast">
        <title>A 12.5 kb fragment of the yeast chromosome II contains two adjacent genes encoding ribosomal proteins and six putative new genes, one of which encodes a putative transcriptional factor.</title>
        <authorList>
            <person name="Demolis N."/>
            <person name="Jacquet M."/>
            <person name="Mallet L."/>
        </authorList>
    </citation>
    <scope>NUCLEOTIDE SEQUENCE [GENOMIC DNA]</scope>
    <source>
        <strain>ATCC 204508 / S288c</strain>
    </source>
</reference>
<reference key="3">
    <citation type="journal article" date="1994" name="EMBO J.">
        <title>Complete DNA sequence of yeast chromosome II.</title>
        <authorList>
            <person name="Feldmann H."/>
            <person name="Aigle M."/>
            <person name="Aljinovic G."/>
            <person name="Andre B."/>
            <person name="Baclet M.C."/>
            <person name="Barthe C."/>
            <person name="Baur A."/>
            <person name="Becam A.-M."/>
            <person name="Biteau N."/>
            <person name="Boles E."/>
            <person name="Brandt T."/>
            <person name="Brendel M."/>
            <person name="Brueckner M."/>
            <person name="Bussereau F."/>
            <person name="Christiansen C."/>
            <person name="Contreras R."/>
            <person name="Crouzet M."/>
            <person name="Cziepluch C."/>
            <person name="Demolis N."/>
            <person name="Delaveau T."/>
            <person name="Doignon F."/>
            <person name="Domdey H."/>
            <person name="Duesterhus S."/>
            <person name="Dubois E."/>
            <person name="Dujon B."/>
            <person name="El Bakkoury M."/>
            <person name="Entian K.-D."/>
            <person name="Feuermann M."/>
            <person name="Fiers W."/>
            <person name="Fobo G.M."/>
            <person name="Fritz C."/>
            <person name="Gassenhuber J."/>
            <person name="Glansdorff N."/>
            <person name="Goffeau A."/>
            <person name="Grivell L.A."/>
            <person name="de Haan M."/>
            <person name="Hein C."/>
            <person name="Herbert C.J."/>
            <person name="Hollenberg C.P."/>
            <person name="Holmstroem K."/>
            <person name="Jacq C."/>
            <person name="Jacquet M."/>
            <person name="Jauniaux J.-C."/>
            <person name="Jonniaux J.-L."/>
            <person name="Kallesoee T."/>
            <person name="Kiesau P."/>
            <person name="Kirchrath L."/>
            <person name="Koetter P."/>
            <person name="Korol S."/>
            <person name="Liebl S."/>
            <person name="Logghe M."/>
            <person name="Lohan A.J.E."/>
            <person name="Louis E.J."/>
            <person name="Li Z.Y."/>
            <person name="Maat M.J."/>
            <person name="Mallet L."/>
            <person name="Mannhaupt G."/>
            <person name="Messenguy F."/>
            <person name="Miosga T."/>
            <person name="Molemans F."/>
            <person name="Mueller S."/>
            <person name="Nasr F."/>
            <person name="Obermaier B."/>
            <person name="Perea J."/>
            <person name="Pierard A."/>
            <person name="Piravandi E."/>
            <person name="Pohl F.M."/>
            <person name="Pohl T.M."/>
            <person name="Potier S."/>
            <person name="Proft M."/>
            <person name="Purnelle B."/>
            <person name="Ramezani Rad M."/>
            <person name="Rieger M."/>
            <person name="Rose M."/>
            <person name="Schaaff-Gerstenschlaeger I."/>
            <person name="Scherens B."/>
            <person name="Schwarzlose C."/>
            <person name="Skala J."/>
            <person name="Slonimski P.P."/>
            <person name="Smits P.H.M."/>
            <person name="Souciet J.-L."/>
            <person name="Steensma H.Y."/>
            <person name="Stucka R."/>
            <person name="Urrestarazu L.A."/>
            <person name="van der Aart Q.J.M."/>
            <person name="Van Dyck L."/>
            <person name="Vassarotti A."/>
            <person name="Vetter I."/>
            <person name="Vierendeels F."/>
            <person name="Vissers S."/>
            <person name="Wagner G."/>
            <person name="de Wergifosse P."/>
            <person name="Wolfe K.H."/>
            <person name="Zagulski M."/>
            <person name="Zimmermann F.K."/>
            <person name="Mewes H.-W."/>
            <person name="Kleine K."/>
        </authorList>
    </citation>
    <scope>NUCLEOTIDE SEQUENCE [LARGE SCALE GENOMIC DNA]</scope>
    <source>
        <strain>ATCC 204508 / S288c</strain>
    </source>
</reference>
<reference key="4">
    <citation type="journal article" date="2014" name="G3 (Bethesda)">
        <title>The reference genome sequence of Saccharomyces cerevisiae: Then and now.</title>
        <authorList>
            <person name="Engel S.R."/>
            <person name="Dietrich F.S."/>
            <person name="Fisk D.G."/>
            <person name="Binkley G."/>
            <person name="Balakrishnan R."/>
            <person name="Costanzo M.C."/>
            <person name="Dwight S.S."/>
            <person name="Hitz B.C."/>
            <person name="Karra K."/>
            <person name="Nash R.S."/>
            <person name="Weng S."/>
            <person name="Wong E.D."/>
            <person name="Lloyd P."/>
            <person name="Skrzypek M.S."/>
            <person name="Miyasato S.R."/>
            <person name="Simison M."/>
            <person name="Cherry J.M."/>
        </authorList>
    </citation>
    <scope>GENOME REANNOTATION</scope>
    <source>
        <strain>ATCC 204508 / S288c</strain>
    </source>
</reference>
<reference key="5">
    <citation type="journal article" date="1982" name="Biochemistry">
        <title>Isolation of seventeen proteins and amino-terminal amino acid sequences of eight proteins from cytoplasmic ribosomes of yeast.</title>
        <authorList>
            <person name="Otaka E."/>
            <person name="Higo K."/>
            <person name="Osawa S."/>
        </authorList>
    </citation>
    <scope>PROTEIN SEQUENCE OF 2-24</scope>
</reference>
<reference key="6">
    <citation type="journal article" date="1998" name="Yeast">
        <title>The list of cytoplasmic ribosomal proteins of Saccharomyces cerevisiae.</title>
        <authorList>
            <person name="Planta R.J."/>
            <person name="Mager W.H."/>
        </authorList>
    </citation>
    <scope>NOMENCLATURE</scope>
    <scope>SUBUNIT</scope>
</reference>
<reference key="7">
    <citation type="journal article" date="2003" name="Nature">
        <title>Global analysis of protein localization in budding yeast.</title>
        <authorList>
            <person name="Huh W.-K."/>
            <person name="Falvo J.V."/>
            <person name="Gerke L.C."/>
            <person name="Carroll A.S."/>
            <person name="Howson R.W."/>
            <person name="Weissman J.S."/>
            <person name="O'Shea E.K."/>
        </authorList>
    </citation>
    <scope>SUBCELLULAR LOCATION [LARGE SCALE ANALYSIS]</scope>
</reference>
<reference key="8">
    <citation type="journal article" date="2003" name="Nature">
        <title>Global analysis of protein expression in yeast.</title>
        <authorList>
            <person name="Ghaemmaghami S."/>
            <person name="Huh W.-K."/>
            <person name="Bower K."/>
            <person name="Howson R.W."/>
            <person name="Belle A."/>
            <person name="Dephoure N."/>
            <person name="O'Shea E.K."/>
            <person name="Weissman J.S."/>
        </authorList>
    </citation>
    <scope>LEVEL OF PROTEIN EXPRESSION [LARGE SCALE ANALYSIS]</scope>
</reference>
<reference key="9">
    <citation type="journal article" date="2004" name="Eukaryot. Cell">
        <title>The small-subunit processome is a ribosome assembly intermediate.</title>
        <authorList>
            <person name="Bernstein K.A."/>
            <person name="Gallagher J.E.G."/>
            <person name="Mitchell B.M."/>
            <person name="Granneman S."/>
            <person name="Baserga S.J."/>
        </authorList>
    </citation>
    <scope>FUNCTION</scope>
    <scope>INTERACTION WITH MPP10 AND SNORNA U3</scope>
    <scope>IDENTIFICATION IN SSU PROCESSOME</scope>
    <scope>SUBCELLULAR LOCATION</scope>
</reference>
<reference key="10">
    <citation type="journal article" date="2007" name="J. Proteome Res.">
        <title>Large-scale phosphorylation analysis of alpha-factor-arrested Saccharomyces cerevisiae.</title>
        <authorList>
            <person name="Li X."/>
            <person name="Gerber S.A."/>
            <person name="Rudner A.D."/>
            <person name="Beausoleil S.A."/>
            <person name="Haas W."/>
            <person name="Villen J."/>
            <person name="Elias J.E."/>
            <person name="Gygi S.P."/>
        </authorList>
    </citation>
    <scope>PHOSPHORYLATION [LARGE SCALE ANALYSIS] AT SER-184</scope>
    <scope>IDENTIFICATION BY MASS SPECTROMETRY [LARGE SCALE ANALYSIS]</scope>
    <source>
        <strain>ADR376</strain>
    </source>
</reference>
<reference key="11">
    <citation type="journal article" date="2008" name="Mol. Cell. Proteomics">
        <title>A multidimensional chromatography technology for in-depth phosphoproteome analysis.</title>
        <authorList>
            <person name="Albuquerque C.P."/>
            <person name="Smolka M.B."/>
            <person name="Payne S.H."/>
            <person name="Bafna V."/>
            <person name="Eng J."/>
            <person name="Zhou H."/>
        </authorList>
    </citation>
    <scope>PHOSPHORYLATION [LARGE SCALE ANALYSIS] AT SER-184</scope>
    <scope>IDENTIFICATION BY MASS SPECTROMETRY [LARGE SCALE ANALYSIS]</scope>
</reference>
<reference key="12">
    <citation type="journal article" date="2009" name="Science">
        <title>Global analysis of Cdk1 substrate phosphorylation sites provides insights into evolution.</title>
        <authorList>
            <person name="Holt L.J."/>
            <person name="Tuch B.B."/>
            <person name="Villen J."/>
            <person name="Johnson A.D."/>
            <person name="Gygi S.P."/>
            <person name="Morgan D.O."/>
        </authorList>
    </citation>
    <scope>PHOSPHORYLATION [LARGE SCALE ANALYSIS] AT SER-184</scope>
    <scope>IDENTIFICATION BY MASS SPECTROMETRY [LARGE SCALE ANALYSIS]</scope>
</reference>
<reference key="13">
    <citation type="journal article" date="2011" name="Science">
        <title>The structure of the eukaryotic ribosome at 3.0 A resolution.</title>
        <authorList>
            <person name="Ben-Shem A."/>
            <person name="Garreau de Loubresse N."/>
            <person name="Melnikov S."/>
            <person name="Jenner L."/>
            <person name="Yusupova G."/>
            <person name="Yusupov M."/>
        </authorList>
    </citation>
    <scope>SUBUNIT</scope>
    <scope>SUBCELLULAR LOCATION</scope>
</reference>
<reference key="14">
    <citation type="journal article" date="2012" name="Proteomics">
        <title>Sites of ubiquitin attachment in Saccharomyces cerevisiae.</title>
        <authorList>
            <person name="Starita L.M."/>
            <person name="Lo R.S."/>
            <person name="Eng J.K."/>
            <person name="von Haller P.D."/>
            <person name="Fields S."/>
        </authorList>
    </citation>
    <scope>UBIQUITINATION [LARGE SCALE ANALYSIS] AT LYS-180</scope>
    <scope>IDENTIFICATION BY MASS SPECTROMETRY [LARGE SCALE ANALYSIS]</scope>
</reference>
<reference key="15">
    <citation type="journal article" date="2014" name="Curr. Opin. Struct. Biol.">
        <title>A new system for naming ribosomal proteins.</title>
        <authorList>
            <person name="Ban N."/>
            <person name="Beckmann R."/>
            <person name="Cate J.H.D."/>
            <person name="Dinman J.D."/>
            <person name="Dragon F."/>
            <person name="Ellis S.R."/>
            <person name="Lafontaine D.L.J."/>
            <person name="Lindahl L."/>
            <person name="Liljas A."/>
            <person name="Lipton J.M."/>
            <person name="McAlear M.A."/>
            <person name="Moore P.B."/>
            <person name="Noller H.F."/>
            <person name="Ortega J."/>
            <person name="Panse V.G."/>
            <person name="Ramakrishnan V."/>
            <person name="Spahn C.M.T."/>
            <person name="Steitz T.A."/>
            <person name="Tchorzewski M."/>
            <person name="Tollervey D."/>
            <person name="Warren A.J."/>
            <person name="Williamson J.R."/>
            <person name="Wilson D."/>
            <person name="Yonath A."/>
            <person name="Yusupov M."/>
        </authorList>
    </citation>
    <scope>NOMENCLATURE</scope>
</reference>
<evidence type="ECO:0000255" key="1">
    <source>
        <dbReference type="PROSITE-ProRule" id="PRU00182"/>
    </source>
</evidence>
<evidence type="ECO:0000256" key="2">
    <source>
        <dbReference type="SAM" id="MobiDB-lite"/>
    </source>
</evidence>
<evidence type="ECO:0000269" key="3">
    <source>
    </source>
</evidence>
<evidence type="ECO:0000269" key="4">
    <source>
    </source>
</evidence>
<evidence type="ECO:0000269" key="5">
    <source>
    </source>
</evidence>
<evidence type="ECO:0000269" key="6">
    <source>
    </source>
</evidence>
<evidence type="ECO:0000303" key="7">
    <source>
    </source>
</evidence>
<evidence type="ECO:0000303" key="8">
    <source>
    </source>
</evidence>
<evidence type="ECO:0000305" key="9"/>
<evidence type="ECO:0000305" key="10">
    <source>
    </source>
</evidence>
<evidence type="ECO:0000305" key="11">
    <source>
    </source>
</evidence>
<evidence type="ECO:0007744" key="12">
    <source>
    </source>
</evidence>
<evidence type="ECO:0007744" key="13">
    <source>
    </source>
</evidence>
<evidence type="ECO:0007744" key="14">
    <source>
    </source>
</evidence>
<evidence type="ECO:0007744" key="15">
    <source>
    </source>
</evidence>